<proteinExistence type="evidence at transcript level"/>
<gene>
    <name type="primary">tmem248</name>
    <name type="ORF">zgc:103561</name>
</gene>
<feature type="chain" id="PRO_0000295129" description="Transmembrane protein 248">
    <location>
        <begin position="1"/>
        <end position="315"/>
    </location>
</feature>
<feature type="transmembrane region" description="Helical" evidence="1">
    <location>
        <begin position="22"/>
        <end position="42"/>
    </location>
</feature>
<feature type="transmembrane region" description="Helical" evidence="1">
    <location>
        <begin position="271"/>
        <end position="291"/>
    </location>
</feature>
<feature type="region of interest" description="Disordered" evidence="2">
    <location>
        <begin position="81"/>
        <end position="107"/>
    </location>
</feature>
<feature type="compositionally biased region" description="Low complexity" evidence="2">
    <location>
        <begin position="88"/>
        <end position="101"/>
    </location>
</feature>
<organism>
    <name type="scientific">Danio rerio</name>
    <name type="common">Zebrafish</name>
    <name type="synonym">Brachydanio rerio</name>
    <dbReference type="NCBI Taxonomy" id="7955"/>
    <lineage>
        <taxon>Eukaryota</taxon>
        <taxon>Metazoa</taxon>
        <taxon>Chordata</taxon>
        <taxon>Craniata</taxon>
        <taxon>Vertebrata</taxon>
        <taxon>Euteleostomi</taxon>
        <taxon>Actinopterygii</taxon>
        <taxon>Neopterygii</taxon>
        <taxon>Teleostei</taxon>
        <taxon>Ostariophysi</taxon>
        <taxon>Cypriniformes</taxon>
        <taxon>Danionidae</taxon>
        <taxon>Danioninae</taxon>
        <taxon>Danio</taxon>
    </lineage>
</organism>
<reference key="1">
    <citation type="submission" date="2005-03" db="EMBL/GenBank/DDBJ databases">
        <authorList>
            <consortium name="NIH - Zebrafish Gene Collection (ZGC) project"/>
        </authorList>
    </citation>
    <scope>NUCLEOTIDE SEQUENCE [LARGE SCALE MRNA]</scope>
    <source>
        <tissue>Ovary</tissue>
    </source>
</reference>
<dbReference type="EMBL" id="BC090900">
    <property type="protein sequence ID" value="AAH90900.1"/>
    <property type="molecule type" value="mRNA"/>
</dbReference>
<dbReference type="RefSeq" id="NP_001013548.1">
    <property type="nucleotide sequence ID" value="NM_001013530.1"/>
</dbReference>
<dbReference type="SMR" id="Q5BKX0"/>
<dbReference type="FunCoup" id="Q5BKX0">
    <property type="interactions" value="1137"/>
</dbReference>
<dbReference type="STRING" id="7955.ENSDARP00000027014"/>
<dbReference type="PaxDb" id="7955-ENSDARP00000027014"/>
<dbReference type="GeneID" id="541403"/>
<dbReference type="KEGG" id="dre:541403"/>
<dbReference type="AGR" id="ZFIN:ZDB-GENE-050320-103"/>
<dbReference type="CTD" id="55069"/>
<dbReference type="ZFIN" id="ZDB-GENE-050320-103">
    <property type="gene designation" value="tmem248"/>
</dbReference>
<dbReference type="eggNOG" id="ENOG502R6D8">
    <property type="taxonomic scope" value="Eukaryota"/>
</dbReference>
<dbReference type="InParanoid" id="Q5BKX0"/>
<dbReference type="OrthoDB" id="6329605at2759"/>
<dbReference type="PhylomeDB" id="Q5BKX0"/>
<dbReference type="PRO" id="PR:Q5BKX0"/>
<dbReference type="Proteomes" id="UP000000437">
    <property type="component" value="Chromosome 5"/>
</dbReference>
<dbReference type="GO" id="GO:0016020">
    <property type="term" value="C:membrane"/>
    <property type="evidence" value="ECO:0007669"/>
    <property type="project" value="UniProtKB-SubCell"/>
</dbReference>
<dbReference type="InterPro" id="IPR039493">
    <property type="entry name" value="TMEM248/TMEM219"/>
</dbReference>
<dbReference type="InterPro" id="IPR039587">
    <property type="entry name" value="TMEM248/TMEM219_dom"/>
</dbReference>
<dbReference type="PANTHER" id="PTHR16002:SF5">
    <property type="entry name" value="TRANSMEMBRANE PROTEIN 248"/>
    <property type="match status" value="1"/>
</dbReference>
<dbReference type="PANTHER" id="PTHR16002">
    <property type="entry name" value="TRANSMEMBRANE PROTEIN 248-LIKE"/>
    <property type="match status" value="1"/>
</dbReference>
<dbReference type="Pfam" id="PF14940">
    <property type="entry name" value="TMEM219"/>
    <property type="match status" value="1"/>
</dbReference>
<accession>Q5BKX0</accession>
<evidence type="ECO:0000255" key="1"/>
<evidence type="ECO:0000256" key="2">
    <source>
        <dbReference type="SAM" id="MobiDB-lite"/>
    </source>
</evidence>
<evidence type="ECO:0000305" key="3"/>
<sequence length="315" mass="35447">MVLLLNPLENLKTYISNRPPLVIFMVSVSAVAIAFLTIGYFFKIKEIKSPEMTEDWNTFLLRFNEIDFCISENETLKHGLNESITPESTVTSSQTRSSTQSPPLLEDPGPINISVAITLTLDPLRPFGGYSRNITHLYASVLGQQVGLAGREAHEEMNITFTLPVAWNSDECVLHGRCEQMVFSTCMTVTAASNVFPVTMQPPHCVPETYSNATSWYKIFTTARDSDTKYTQEYNPFWCYKGAIGKVYHTLNPKLTVIVPDDDRSLINLHLMHTSYFLFVMVITMFCYAVIKGRPGKVRQNNPDFCQEKVALSAG</sequence>
<name>TM248_DANRE</name>
<protein>
    <recommendedName>
        <fullName>Transmembrane protein 248</fullName>
    </recommendedName>
</protein>
<comment type="subcellular location">
    <subcellularLocation>
        <location evidence="3">Membrane</location>
        <topology evidence="3">Multi-pass membrane protein</topology>
    </subcellularLocation>
</comment>
<comment type="similarity">
    <text evidence="3">Belongs to the TMEM248 family.</text>
</comment>
<keyword id="KW-0472">Membrane</keyword>
<keyword id="KW-1185">Reference proteome</keyword>
<keyword id="KW-0812">Transmembrane</keyword>
<keyword id="KW-1133">Transmembrane helix</keyword>